<organism>
    <name type="scientific">Mus musculus</name>
    <name type="common">Mouse</name>
    <dbReference type="NCBI Taxonomy" id="10090"/>
    <lineage>
        <taxon>Eukaryota</taxon>
        <taxon>Metazoa</taxon>
        <taxon>Chordata</taxon>
        <taxon>Craniata</taxon>
        <taxon>Vertebrata</taxon>
        <taxon>Euteleostomi</taxon>
        <taxon>Mammalia</taxon>
        <taxon>Eutheria</taxon>
        <taxon>Euarchontoglires</taxon>
        <taxon>Glires</taxon>
        <taxon>Rodentia</taxon>
        <taxon>Myomorpha</taxon>
        <taxon>Muroidea</taxon>
        <taxon>Muridae</taxon>
        <taxon>Murinae</taxon>
        <taxon>Mus</taxon>
        <taxon>Mus</taxon>
    </lineage>
</organism>
<gene>
    <name type="primary">Vnn1</name>
</gene>
<proteinExistence type="evidence at protein level"/>
<feature type="signal peptide" evidence="5">
    <location>
        <begin position="1"/>
        <end position="23"/>
    </location>
</feature>
<feature type="chain" id="PRO_0000019714" description="Pantetheinase">
    <location>
        <begin position="24"/>
        <end position="488"/>
    </location>
</feature>
<feature type="propeptide" id="PRO_0000019715" description="Removed in mature form" evidence="2">
    <location>
        <begin position="489"/>
        <end position="512"/>
    </location>
</feature>
<feature type="domain" description="CN hydrolase" evidence="3">
    <location>
        <begin position="32"/>
        <end position="308"/>
    </location>
</feature>
<feature type="active site" description="Proton acceptor" evidence="3">
    <location>
        <position position="81"/>
    </location>
</feature>
<feature type="active site" description="Proton donor" evidence="3">
    <location>
        <position position="180"/>
    </location>
</feature>
<feature type="active site" description="Nucleophile" evidence="3">
    <location>
        <position position="213"/>
    </location>
</feature>
<feature type="lipid moiety-binding region" description="GPI-anchor amidated asparagine" evidence="2">
    <location>
        <position position="488"/>
    </location>
</feature>
<feature type="glycosylation site" description="N-linked (GlcNAc...) asparagine" evidence="2">
    <location>
        <position position="132"/>
    </location>
</feature>
<feature type="glycosylation site" description="N-linked (GlcNAc...) asparagine" evidence="2">
    <location>
        <position position="148"/>
    </location>
</feature>
<feature type="glycosylation site" description="N-linked (GlcNAc...) asparagine" evidence="2">
    <location>
        <position position="316"/>
    </location>
</feature>
<feature type="glycosylation site" description="N-linked (GlcNAc...) asparagine" evidence="2">
    <location>
        <position position="354"/>
    </location>
</feature>
<feature type="sequence conflict" description="In Ref. 1; CAA10567 and 4; AAH19203." evidence="6" ref="1 4">
    <original>M</original>
    <variation>T</variation>
    <location>
        <position position="3"/>
    </location>
</feature>
<feature type="sequence conflict" description="In Ref. 1; CAA10567." evidence="6" ref="1">
    <original>S</original>
    <variation>G</variation>
    <location>
        <position position="49"/>
    </location>
</feature>
<feature type="sequence conflict" description="In Ref. 2; BAB22347." evidence="6" ref="2">
    <original>KQ</original>
    <variation>NE</variation>
    <location>
        <begin position="71"/>
        <end position="72"/>
    </location>
</feature>
<evidence type="ECO:0000250" key="1">
    <source>
        <dbReference type="UniProtKB" id="O95497"/>
    </source>
</evidence>
<evidence type="ECO:0000255" key="2"/>
<evidence type="ECO:0000255" key="3">
    <source>
        <dbReference type="PROSITE-ProRule" id="PRU00054"/>
    </source>
</evidence>
<evidence type="ECO:0000269" key="4">
    <source>
    </source>
</evidence>
<evidence type="ECO:0000269" key="5">
    <source>
    </source>
</evidence>
<evidence type="ECO:0000305" key="6"/>
<evidence type="ECO:0000305" key="7">
    <source>
    </source>
</evidence>
<evidence type="ECO:0000305" key="8">
    <source>
    </source>
</evidence>
<protein>
    <recommendedName>
        <fullName>Pantetheinase</fullName>
        <ecNumber evidence="4">3.5.1.92</ecNumber>
    </recommendedName>
    <alternativeName>
        <fullName>Pantetheine hydrolase</fullName>
    </alternativeName>
    <alternativeName>
        <fullName>Vascular non-inflammatory molecule 1</fullName>
        <shortName>Vanin-1</shortName>
    </alternativeName>
</protein>
<comment type="function">
    <text evidence="4">Amidohydrolase that hydrolyzes specifically one of the carboamide linkages in D-pantetheine thus recycling pantothenic acid (vitamin B5) and releasing cysteamine.</text>
</comment>
<comment type="catalytic activity">
    <reaction evidence="4">
        <text>(R)-pantetheine + H2O = cysteamine + (R)-pantothenate</text>
        <dbReference type="Rhea" id="RHEA:13445"/>
        <dbReference type="ChEBI" id="CHEBI:15377"/>
        <dbReference type="ChEBI" id="CHEBI:16753"/>
        <dbReference type="ChEBI" id="CHEBI:29032"/>
        <dbReference type="ChEBI" id="CHEBI:58029"/>
        <dbReference type="EC" id="3.5.1.92"/>
    </reaction>
</comment>
<comment type="subunit">
    <text evidence="1">Monomer.</text>
</comment>
<comment type="subcellular location">
    <subcellularLocation>
        <location evidence="7 8">Cell membrane</location>
        <topology evidence="7 8">Lipid-anchor</topology>
        <topology evidence="7 8">GPI-anchor</topology>
    </subcellularLocation>
</comment>
<comment type="tissue specificity">
    <text evidence="4">Detected in kidney (at protein level). Ubiquitous.</text>
</comment>
<comment type="PTM">
    <text evidence="5">N-glycosylated.</text>
</comment>
<comment type="disruption phenotype">
    <text evidence="4">No visible phenotype. Mice lack detectable levels of cysteamine in liver and kidney.</text>
</comment>
<comment type="similarity">
    <text evidence="6">Belongs to the carbon-nitrogen hydrolase superfamily. BTD/VNN family.</text>
</comment>
<keyword id="KW-1003">Cell membrane</keyword>
<keyword id="KW-0903">Direct protein sequencing</keyword>
<keyword id="KW-0325">Glycoprotein</keyword>
<keyword id="KW-0336">GPI-anchor</keyword>
<keyword id="KW-0378">Hydrolase</keyword>
<keyword id="KW-0449">Lipoprotein</keyword>
<keyword id="KW-0472">Membrane</keyword>
<keyword id="KW-1185">Reference proteome</keyword>
<keyword id="KW-0732">Signal</keyword>
<reference key="1">
    <citation type="journal article" date="1996" name="Immunity">
        <title>Vanin-1, a novel GPI-linked perivascular molecule involved in thymus homing.</title>
        <authorList>
            <person name="Aurrand-Lions M."/>
            <person name="Galland F."/>
            <person name="Bazin H."/>
            <person name="Zakharyev V.M."/>
            <person name="Imhof B.A."/>
            <person name="Naquet P."/>
        </authorList>
    </citation>
    <scope>NUCLEOTIDE SEQUENCE [MRNA]</scope>
    <scope>PROTEIN SEQUENCE OF 24-47</scope>
    <scope>GLYCOSYLATION</scope>
    <scope>SUBCELLULAR LOCATION</scope>
</reference>
<reference key="2">
    <citation type="journal article" date="2005" name="Science">
        <title>The transcriptional landscape of the mammalian genome.</title>
        <authorList>
            <person name="Carninci P."/>
            <person name="Kasukawa T."/>
            <person name="Katayama S."/>
            <person name="Gough J."/>
            <person name="Frith M.C."/>
            <person name="Maeda N."/>
            <person name="Oyama R."/>
            <person name="Ravasi T."/>
            <person name="Lenhard B."/>
            <person name="Wells C."/>
            <person name="Kodzius R."/>
            <person name="Shimokawa K."/>
            <person name="Bajic V.B."/>
            <person name="Brenner S.E."/>
            <person name="Batalov S."/>
            <person name="Forrest A.R."/>
            <person name="Zavolan M."/>
            <person name="Davis M.J."/>
            <person name="Wilming L.G."/>
            <person name="Aidinis V."/>
            <person name="Allen J.E."/>
            <person name="Ambesi-Impiombato A."/>
            <person name="Apweiler R."/>
            <person name="Aturaliya R.N."/>
            <person name="Bailey T.L."/>
            <person name="Bansal M."/>
            <person name="Baxter L."/>
            <person name="Beisel K.W."/>
            <person name="Bersano T."/>
            <person name="Bono H."/>
            <person name="Chalk A.M."/>
            <person name="Chiu K.P."/>
            <person name="Choudhary V."/>
            <person name="Christoffels A."/>
            <person name="Clutterbuck D.R."/>
            <person name="Crowe M.L."/>
            <person name="Dalla E."/>
            <person name="Dalrymple B.P."/>
            <person name="de Bono B."/>
            <person name="Della Gatta G."/>
            <person name="di Bernardo D."/>
            <person name="Down T."/>
            <person name="Engstrom P."/>
            <person name="Fagiolini M."/>
            <person name="Faulkner G."/>
            <person name="Fletcher C.F."/>
            <person name="Fukushima T."/>
            <person name="Furuno M."/>
            <person name="Futaki S."/>
            <person name="Gariboldi M."/>
            <person name="Georgii-Hemming P."/>
            <person name="Gingeras T.R."/>
            <person name="Gojobori T."/>
            <person name="Green R.E."/>
            <person name="Gustincich S."/>
            <person name="Harbers M."/>
            <person name="Hayashi Y."/>
            <person name="Hensch T.K."/>
            <person name="Hirokawa N."/>
            <person name="Hill D."/>
            <person name="Huminiecki L."/>
            <person name="Iacono M."/>
            <person name="Ikeo K."/>
            <person name="Iwama A."/>
            <person name="Ishikawa T."/>
            <person name="Jakt M."/>
            <person name="Kanapin A."/>
            <person name="Katoh M."/>
            <person name="Kawasawa Y."/>
            <person name="Kelso J."/>
            <person name="Kitamura H."/>
            <person name="Kitano H."/>
            <person name="Kollias G."/>
            <person name="Krishnan S.P."/>
            <person name="Kruger A."/>
            <person name="Kummerfeld S.K."/>
            <person name="Kurochkin I.V."/>
            <person name="Lareau L.F."/>
            <person name="Lazarevic D."/>
            <person name="Lipovich L."/>
            <person name="Liu J."/>
            <person name="Liuni S."/>
            <person name="McWilliam S."/>
            <person name="Madan Babu M."/>
            <person name="Madera M."/>
            <person name="Marchionni L."/>
            <person name="Matsuda H."/>
            <person name="Matsuzawa S."/>
            <person name="Miki H."/>
            <person name="Mignone F."/>
            <person name="Miyake S."/>
            <person name="Morris K."/>
            <person name="Mottagui-Tabar S."/>
            <person name="Mulder N."/>
            <person name="Nakano N."/>
            <person name="Nakauchi H."/>
            <person name="Ng P."/>
            <person name="Nilsson R."/>
            <person name="Nishiguchi S."/>
            <person name="Nishikawa S."/>
            <person name="Nori F."/>
            <person name="Ohara O."/>
            <person name="Okazaki Y."/>
            <person name="Orlando V."/>
            <person name="Pang K.C."/>
            <person name="Pavan W.J."/>
            <person name="Pavesi G."/>
            <person name="Pesole G."/>
            <person name="Petrovsky N."/>
            <person name="Piazza S."/>
            <person name="Reed J."/>
            <person name="Reid J.F."/>
            <person name="Ring B.Z."/>
            <person name="Ringwald M."/>
            <person name="Rost B."/>
            <person name="Ruan Y."/>
            <person name="Salzberg S.L."/>
            <person name="Sandelin A."/>
            <person name="Schneider C."/>
            <person name="Schoenbach C."/>
            <person name="Sekiguchi K."/>
            <person name="Semple C.A."/>
            <person name="Seno S."/>
            <person name="Sessa L."/>
            <person name="Sheng Y."/>
            <person name="Shibata Y."/>
            <person name="Shimada H."/>
            <person name="Shimada K."/>
            <person name="Silva D."/>
            <person name="Sinclair B."/>
            <person name="Sperling S."/>
            <person name="Stupka E."/>
            <person name="Sugiura K."/>
            <person name="Sultana R."/>
            <person name="Takenaka Y."/>
            <person name="Taki K."/>
            <person name="Tammoja K."/>
            <person name="Tan S.L."/>
            <person name="Tang S."/>
            <person name="Taylor M.S."/>
            <person name="Tegner J."/>
            <person name="Teichmann S.A."/>
            <person name="Ueda H.R."/>
            <person name="van Nimwegen E."/>
            <person name="Verardo R."/>
            <person name="Wei C.L."/>
            <person name="Yagi K."/>
            <person name="Yamanishi H."/>
            <person name="Zabarovsky E."/>
            <person name="Zhu S."/>
            <person name="Zimmer A."/>
            <person name="Hide W."/>
            <person name="Bult C."/>
            <person name="Grimmond S.M."/>
            <person name="Teasdale R.D."/>
            <person name="Liu E.T."/>
            <person name="Brusic V."/>
            <person name="Quackenbush J."/>
            <person name="Wahlestedt C."/>
            <person name="Mattick J.S."/>
            <person name="Hume D.A."/>
            <person name="Kai C."/>
            <person name="Sasaki D."/>
            <person name="Tomaru Y."/>
            <person name="Fukuda S."/>
            <person name="Kanamori-Katayama M."/>
            <person name="Suzuki M."/>
            <person name="Aoki J."/>
            <person name="Arakawa T."/>
            <person name="Iida J."/>
            <person name="Imamura K."/>
            <person name="Itoh M."/>
            <person name="Kato T."/>
            <person name="Kawaji H."/>
            <person name="Kawagashira N."/>
            <person name="Kawashima T."/>
            <person name="Kojima M."/>
            <person name="Kondo S."/>
            <person name="Konno H."/>
            <person name="Nakano K."/>
            <person name="Ninomiya N."/>
            <person name="Nishio T."/>
            <person name="Okada M."/>
            <person name="Plessy C."/>
            <person name="Shibata K."/>
            <person name="Shiraki T."/>
            <person name="Suzuki S."/>
            <person name="Tagami M."/>
            <person name="Waki K."/>
            <person name="Watahiki A."/>
            <person name="Okamura-Oho Y."/>
            <person name="Suzuki H."/>
            <person name="Kawai J."/>
            <person name="Hayashizaki Y."/>
        </authorList>
    </citation>
    <scope>NUCLEOTIDE SEQUENCE [LARGE SCALE MRNA]</scope>
    <source>
        <strain>C57BL/6J</strain>
        <tissue>Kidney</tissue>
        <tissue>Placenta</tissue>
    </source>
</reference>
<reference key="3">
    <citation type="submission" date="2005-07" db="EMBL/GenBank/DDBJ databases">
        <authorList>
            <person name="Mural R.J."/>
            <person name="Adams M.D."/>
            <person name="Myers E.W."/>
            <person name="Smith H.O."/>
            <person name="Venter J.C."/>
        </authorList>
    </citation>
    <scope>NUCLEOTIDE SEQUENCE [LARGE SCALE GENOMIC DNA]</scope>
</reference>
<reference key="4">
    <citation type="journal article" date="2004" name="Genome Res.">
        <title>The status, quality, and expansion of the NIH full-length cDNA project: the Mammalian Gene Collection (MGC).</title>
        <authorList>
            <consortium name="The MGC Project Team"/>
        </authorList>
    </citation>
    <scope>NUCLEOTIDE SEQUENCE [LARGE SCALE MRNA]</scope>
    <source>
        <tissue>Kidney</tissue>
    </source>
</reference>
<reference key="5">
    <citation type="journal article" date="1999" name="FEBS Lett.">
        <title>Is pantetheinase the actual identity of mouse and human vanin-1 proteins?</title>
        <authorList>
            <person name="Maras B."/>
            <person name="Barra D."/>
            <person name="Dupre S."/>
            <person name="Pitari G."/>
        </authorList>
    </citation>
    <scope>IDENTIFICATION</scope>
</reference>
<reference key="6">
    <citation type="journal article" date="2000" name="FEBS Lett.">
        <title>Pantetheinase activity of membrane-bound Vanin-1: lack of free cysteamine in tissues of Vanin-1 deficient mice.</title>
        <authorList>
            <person name="Pitari G."/>
            <person name="Malergue F."/>
            <person name="Martin F."/>
            <person name="Philippe J.-M."/>
            <person name="Massucci M.T."/>
            <person name="Chabret C."/>
            <person name="Maras B."/>
            <person name="Dupre S."/>
            <person name="Naquet P."/>
            <person name="Galland F."/>
        </authorList>
    </citation>
    <scope>FUNCTION</scope>
    <scope>CATALYTIC ACTIVITY</scope>
    <scope>SUBCELLULAR LOCATION</scope>
    <scope>TISSUE SPECIFICITY</scope>
    <scope>DISRUPTION PHENOTYPE</scope>
</reference>
<reference key="7">
    <citation type="journal article" date="2010" name="Cell">
        <title>A tissue-specific atlas of mouse protein phosphorylation and expression.</title>
        <authorList>
            <person name="Huttlin E.L."/>
            <person name="Jedrychowski M.P."/>
            <person name="Elias J.E."/>
            <person name="Goswami T."/>
            <person name="Rad R."/>
            <person name="Beausoleil S.A."/>
            <person name="Villen J."/>
            <person name="Haas W."/>
            <person name="Sowa M.E."/>
            <person name="Gygi S.P."/>
        </authorList>
    </citation>
    <scope>IDENTIFICATION BY MASS SPECTROMETRY [LARGE SCALE ANALYSIS]</scope>
    <source>
        <tissue>Brown adipose tissue</tissue>
        <tissue>Kidney</tissue>
        <tissue>Testis</tissue>
    </source>
</reference>
<name>VNN1_MOUSE</name>
<dbReference type="EC" id="3.5.1.92" evidence="4"/>
<dbReference type="EMBL" id="AJ132098">
    <property type="protein sequence ID" value="CAA10567.1"/>
    <property type="molecule type" value="mRNA"/>
</dbReference>
<dbReference type="EMBL" id="AK002773">
    <property type="protein sequence ID" value="BAB22347.1"/>
    <property type="molecule type" value="mRNA"/>
</dbReference>
<dbReference type="EMBL" id="AK145984">
    <property type="protein sequence ID" value="BAE26806.1"/>
    <property type="molecule type" value="mRNA"/>
</dbReference>
<dbReference type="EMBL" id="AK167427">
    <property type="protein sequence ID" value="BAE39515.1"/>
    <property type="molecule type" value="mRNA"/>
</dbReference>
<dbReference type="EMBL" id="CH466540">
    <property type="protein sequence ID" value="EDL04771.1"/>
    <property type="molecule type" value="Genomic_DNA"/>
</dbReference>
<dbReference type="EMBL" id="BC019203">
    <property type="protein sequence ID" value="AAH19203.1"/>
    <property type="molecule type" value="mRNA"/>
</dbReference>
<dbReference type="CCDS" id="CCDS35868.1"/>
<dbReference type="RefSeq" id="NP_035834.2">
    <property type="nucleotide sequence ID" value="NM_011704.4"/>
</dbReference>
<dbReference type="SMR" id="Q9Z0K8"/>
<dbReference type="FunCoup" id="Q9Z0K8">
    <property type="interactions" value="160"/>
</dbReference>
<dbReference type="STRING" id="10090.ENSMUSP00000040599"/>
<dbReference type="BindingDB" id="Q9Z0K8"/>
<dbReference type="ChEMBL" id="CHEMBL4802063"/>
<dbReference type="GlyCosmos" id="Q9Z0K8">
    <property type="glycosylation" value="4 sites, No reported glycans"/>
</dbReference>
<dbReference type="GlyGen" id="Q9Z0K8">
    <property type="glycosylation" value="5 sites, 1 O-linked glycan (1 site)"/>
</dbReference>
<dbReference type="iPTMnet" id="Q9Z0K8"/>
<dbReference type="PhosphoSitePlus" id="Q9Z0K8"/>
<dbReference type="SwissPalm" id="Q9Z0K8"/>
<dbReference type="CPTAC" id="non-CPTAC-3504"/>
<dbReference type="jPOST" id="Q9Z0K8"/>
<dbReference type="PaxDb" id="10090-ENSMUSP00000040599"/>
<dbReference type="PeptideAtlas" id="Q9Z0K8"/>
<dbReference type="ProteomicsDB" id="297608"/>
<dbReference type="Antibodypedia" id="32934">
    <property type="antibodies" value="252 antibodies from 32 providers"/>
</dbReference>
<dbReference type="DNASU" id="22361"/>
<dbReference type="Ensembl" id="ENSMUST00000041416.8">
    <property type="protein sequence ID" value="ENSMUSP00000040599.8"/>
    <property type="gene ID" value="ENSMUSG00000037440.9"/>
</dbReference>
<dbReference type="GeneID" id="22361"/>
<dbReference type="KEGG" id="mmu:22361"/>
<dbReference type="UCSC" id="uc007eqc.2">
    <property type="organism name" value="mouse"/>
</dbReference>
<dbReference type="AGR" id="MGI:108395"/>
<dbReference type="CTD" id="8876"/>
<dbReference type="MGI" id="MGI:108395">
    <property type="gene designation" value="Vnn1"/>
</dbReference>
<dbReference type="VEuPathDB" id="HostDB:ENSMUSG00000037440"/>
<dbReference type="eggNOG" id="KOG0806">
    <property type="taxonomic scope" value="Eukaryota"/>
</dbReference>
<dbReference type="GeneTree" id="ENSGT00390000013823"/>
<dbReference type="HOGENOM" id="CLU_033209_2_0_1"/>
<dbReference type="InParanoid" id="Q9Z0K8"/>
<dbReference type="OMA" id="TNLNTCG"/>
<dbReference type="OrthoDB" id="10250282at2759"/>
<dbReference type="PhylomeDB" id="Q9Z0K8"/>
<dbReference type="TreeFam" id="TF323645"/>
<dbReference type="BRENDA" id="3.5.1.92">
    <property type="organism ID" value="3474"/>
</dbReference>
<dbReference type="Reactome" id="R-MMU-163125">
    <property type="pathway name" value="Post-translational modification: synthesis of GPI-anchored proteins"/>
</dbReference>
<dbReference type="Reactome" id="R-MMU-199220">
    <property type="pathway name" value="Vitamin B5 (pantothenate) metabolism"/>
</dbReference>
<dbReference type="Reactome" id="R-MMU-6798695">
    <property type="pathway name" value="Neutrophil degranulation"/>
</dbReference>
<dbReference type="BioGRID-ORCS" id="22361">
    <property type="hits" value="1 hit in 76 CRISPR screens"/>
</dbReference>
<dbReference type="PRO" id="PR:Q9Z0K8"/>
<dbReference type="Proteomes" id="UP000000589">
    <property type="component" value="Chromosome 10"/>
</dbReference>
<dbReference type="RNAct" id="Q9Z0K8">
    <property type="molecule type" value="protein"/>
</dbReference>
<dbReference type="Bgee" id="ENSMUSG00000037440">
    <property type="expression patterns" value="Expressed in placenta labyrinth and 165 other cell types or tissues"/>
</dbReference>
<dbReference type="GO" id="GO:0005615">
    <property type="term" value="C:extracellular space"/>
    <property type="evidence" value="ECO:0000266"/>
    <property type="project" value="MGI"/>
</dbReference>
<dbReference type="GO" id="GO:0016020">
    <property type="term" value="C:membrane"/>
    <property type="evidence" value="ECO:0000304"/>
    <property type="project" value="BHF-UCL"/>
</dbReference>
<dbReference type="GO" id="GO:0005886">
    <property type="term" value="C:plasma membrane"/>
    <property type="evidence" value="ECO:0007669"/>
    <property type="project" value="UniProtKB-SubCell"/>
</dbReference>
<dbReference type="GO" id="GO:0098552">
    <property type="term" value="C:side of membrane"/>
    <property type="evidence" value="ECO:0007669"/>
    <property type="project" value="UniProtKB-KW"/>
</dbReference>
<dbReference type="GO" id="GO:0034235">
    <property type="term" value="F:GPI anchor binding"/>
    <property type="evidence" value="ECO:0000304"/>
    <property type="project" value="BHF-UCL"/>
</dbReference>
<dbReference type="GO" id="GO:0017159">
    <property type="term" value="F:pantetheine hydrolase activity"/>
    <property type="evidence" value="ECO:0000314"/>
    <property type="project" value="MGI"/>
</dbReference>
<dbReference type="GO" id="GO:0002526">
    <property type="term" value="P:acute inflammatory response"/>
    <property type="evidence" value="ECO:0000314"/>
    <property type="project" value="BHF-UCL"/>
</dbReference>
<dbReference type="GO" id="GO:0098609">
    <property type="term" value="P:cell-cell adhesion"/>
    <property type="evidence" value="ECO:0000314"/>
    <property type="project" value="BHF-UCL"/>
</dbReference>
<dbReference type="GO" id="GO:0002544">
    <property type="term" value="P:chronic inflammatory response"/>
    <property type="evidence" value="ECO:0000314"/>
    <property type="project" value="BHF-UCL"/>
</dbReference>
<dbReference type="GO" id="GO:0015938">
    <property type="term" value="P:coenzyme A catabolic process"/>
    <property type="evidence" value="ECO:0000315"/>
    <property type="project" value="MGI"/>
</dbReference>
<dbReference type="GO" id="GO:0006954">
    <property type="term" value="P:inflammatory response"/>
    <property type="evidence" value="ECO:0000315"/>
    <property type="project" value="BHF-UCL"/>
</dbReference>
<dbReference type="GO" id="GO:0045087">
    <property type="term" value="P:innate immune response"/>
    <property type="evidence" value="ECO:0000314"/>
    <property type="project" value="BHF-UCL"/>
</dbReference>
<dbReference type="GO" id="GO:0015939">
    <property type="term" value="P:pantothenate metabolic process"/>
    <property type="evidence" value="ECO:0000250"/>
    <property type="project" value="UniProtKB"/>
</dbReference>
<dbReference type="GO" id="GO:1902177">
    <property type="term" value="P:positive regulation of oxidative stress-induced intrinsic apoptotic signaling pathway"/>
    <property type="evidence" value="ECO:0000315"/>
    <property type="project" value="BHF-UCL"/>
</dbReference>
<dbReference type="GO" id="GO:0033089">
    <property type="term" value="P:positive regulation of T cell differentiation in thymus"/>
    <property type="evidence" value="ECO:0000314"/>
    <property type="project" value="BHF-UCL"/>
</dbReference>
<dbReference type="CDD" id="cd07567">
    <property type="entry name" value="biotinidase_like"/>
    <property type="match status" value="1"/>
</dbReference>
<dbReference type="FunFam" id="3.60.110.10:FF:000001">
    <property type="entry name" value="biotinidase isoform X1"/>
    <property type="match status" value="1"/>
</dbReference>
<dbReference type="Gene3D" id="3.60.110.10">
    <property type="entry name" value="Carbon-nitrogen hydrolase"/>
    <property type="match status" value="1"/>
</dbReference>
<dbReference type="InterPro" id="IPR012101">
    <property type="entry name" value="Biotinidase-like_euk"/>
</dbReference>
<dbReference type="InterPro" id="IPR040154">
    <property type="entry name" value="Biotinidase/VNN"/>
</dbReference>
<dbReference type="InterPro" id="IPR003010">
    <property type="entry name" value="C-N_Hydrolase"/>
</dbReference>
<dbReference type="InterPro" id="IPR036526">
    <property type="entry name" value="C-N_Hydrolase_sf"/>
</dbReference>
<dbReference type="InterPro" id="IPR043957">
    <property type="entry name" value="Vanin_C"/>
</dbReference>
<dbReference type="PANTHER" id="PTHR10609">
    <property type="entry name" value="BIOTINIDASE-RELATED"/>
    <property type="match status" value="1"/>
</dbReference>
<dbReference type="PANTHER" id="PTHR10609:SF16">
    <property type="entry name" value="PANTETHEINASE"/>
    <property type="match status" value="1"/>
</dbReference>
<dbReference type="Pfam" id="PF00795">
    <property type="entry name" value="CN_hydrolase"/>
    <property type="match status" value="1"/>
</dbReference>
<dbReference type="Pfam" id="PF19018">
    <property type="entry name" value="Vanin_C"/>
    <property type="match status" value="1"/>
</dbReference>
<dbReference type="PIRSF" id="PIRSF011861">
    <property type="entry name" value="Biotinidase"/>
    <property type="match status" value="1"/>
</dbReference>
<dbReference type="SUPFAM" id="SSF56317">
    <property type="entry name" value="Carbon-nitrogen hydrolase"/>
    <property type="match status" value="1"/>
</dbReference>
<dbReference type="PROSITE" id="PS50263">
    <property type="entry name" value="CN_HYDROLASE"/>
    <property type="match status" value="1"/>
</dbReference>
<accession>Q9Z0K8</accession>
<accession>Q3TJI0</accession>
<accession>Q8VCT1</accession>
<accession>Q9DCH8</accession>
<sequence>MGMSWWLACAAAFSALCVLKASSLDTFLAAVYEHAVILPKDTLLPVSHSEALALMNQNLDLLEGAIVSAAKQGAHIIVTPEDGIYGVRFTRDTIYPYLEEIPDPQVNWIPCDNPKRFGSTPVQERLSCLAKNNSIYVVANMGDKKPCNTSDSHCPPDGRFQYNTDVVFDSQGKLVARYHKQNIFMGEDQFNVPMEPEFVTFDTPFGKFGVFTCFDILFHDPAVTLVTEFQVDTILFPTAWMDVLPHLAAIEFHSAWAMGMGVNFLAANLHNPSRRMTGSGIYAPDSPRVFHYDRKTQEGKLLFAQLKSHPIHSPVNWTSYASSVESTPTKTQEFQSIVFFDEFTFVELKGIKGNYTVCQNDLCCHLSYQMSEKRADEVYAFGAFDGLHTVEGQYYLQICILLKCKTTNLRTCGSSVDTAFTRFEMFSLSGTFGTRYVFPEVLLSEVKLAPGEFQVSSDGRLVSLKPTSGPVLTIGLFGRLYGKDWASNASSDFIAHSLIIMLIVTPIIHYLC</sequence>